<dbReference type="EMBL" id="AE014075">
    <property type="protein sequence ID" value="AAN79184.1"/>
    <property type="molecule type" value="Genomic_DNA"/>
</dbReference>
<dbReference type="RefSeq" id="WP_000126500.1">
    <property type="nucleotide sequence ID" value="NZ_CP051263.1"/>
</dbReference>
<dbReference type="SMR" id="P0AEF5"/>
<dbReference type="STRING" id="199310.c0711"/>
<dbReference type="GeneID" id="75205018"/>
<dbReference type="KEGG" id="ecc:c0711"/>
<dbReference type="eggNOG" id="COG4565">
    <property type="taxonomic scope" value="Bacteria"/>
</dbReference>
<dbReference type="HOGENOM" id="CLU_000445_39_0_6"/>
<dbReference type="BioCyc" id="ECOL199310:C0711-MONOMER"/>
<dbReference type="Proteomes" id="UP000001410">
    <property type="component" value="Chromosome"/>
</dbReference>
<dbReference type="GO" id="GO:0005737">
    <property type="term" value="C:cytoplasm"/>
    <property type="evidence" value="ECO:0007669"/>
    <property type="project" value="UniProtKB-SubCell"/>
</dbReference>
<dbReference type="GO" id="GO:0003677">
    <property type="term" value="F:DNA binding"/>
    <property type="evidence" value="ECO:0007669"/>
    <property type="project" value="UniProtKB-KW"/>
</dbReference>
<dbReference type="GO" id="GO:0003700">
    <property type="term" value="F:DNA-binding transcription factor activity"/>
    <property type="evidence" value="ECO:0007669"/>
    <property type="project" value="InterPro"/>
</dbReference>
<dbReference type="GO" id="GO:0000156">
    <property type="term" value="F:phosphorelay response regulator activity"/>
    <property type="evidence" value="ECO:0007669"/>
    <property type="project" value="TreeGrafter"/>
</dbReference>
<dbReference type="CDD" id="cd19925">
    <property type="entry name" value="REC_citrate_TCS"/>
    <property type="match status" value="1"/>
</dbReference>
<dbReference type="FunFam" id="3.40.50.2300:FF:000057">
    <property type="entry name" value="Transcriptional regulatory protein"/>
    <property type="match status" value="1"/>
</dbReference>
<dbReference type="Gene3D" id="3.40.50.2300">
    <property type="match status" value="1"/>
</dbReference>
<dbReference type="InterPro" id="IPR051271">
    <property type="entry name" value="2C-system_Tx_regulators"/>
</dbReference>
<dbReference type="InterPro" id="IPR011006">
    <property type="entry name" value="CheY-like_superfamily"/>
</dbReference>
<dbReference type="InterPro" id="IPR048714">
    <property type="entry name" value="DpiA-like_HTH"/>
</dbReference>
<dbReference type="InterPro" id="IPR024187">
    <property type="entry name" value="Sig_transdc_resp-reg_cit/mal"/>
</dbReference>
<dbReference type="InterPro" id="IPR001789">
    <property type="entry name" value="Sig_transdc_resp-reg_receiver"/>
</dbReference>
<dbReference type="NCBIfam" id="NF007467">
    <property type="entry name" value="PRK10046.1"/>
    <property type="match status" value="1"/>
</dbReference>
<dbReference type="PANTHER" id="PTHR45526:SF1">
    <property type="entry name" value="TRANSCRIPTIONAL REGULATORY PROTEIN DCUR-RELATED"/>
    <property type="match status" value="1"/>
</dbReference>
<dbReference type="PANTHER" id="PTHR45526">
    <property type="entry name" value="TRANSCRIPTIONAL REGULATORY PROTEIN DPIA"/>
    <property type="match status" value="1"/>
</dbReference>
<dbReference type="Pfam" id="PF20714">
    <property type="entry name" value="HTH_64"/>
    <property type="match status" value="1"/>
</dbReference>
<dbReference type="Pfam" id="PF00072">
    <property type="entry name" value="Response_reg"/>
    <property type="match status" value="1"/>
</dbReference>
<dbReference type="PIRSF" id="PIRSF006171">
    <property type="entry name" value="RR_citrat_malat"/>
    <property type="match status" value="1"/>
</dbReference>
<dbReference type="SMART" id="SM00448">
    <property type="entry name" value="REC"/>
    <property type="match status" value="1"/>
</dbReference>
<dbReference type="SUPFAM" id="SSF52172">
    <property type="entry name" value="CheY-like"/>
    <property type="match status" value="1"/>
</dbReference>
<dbReference type="PROSITE" id="PS50110">
    <property type="entry name" value="RESPONSE_REGULATORY"/>
    <property type="match status" value="1"/>
</dbReference>
<reference key="1">
    <citation type="journal article" date="2002" name="Proc. Natl. Acad. Sci. U.S.A.">
        <title>Extensive mosaic structure revealed by the complete genome sequence of uropathogenic Escherichia coli.</title>
        <authorList>
            <person name="Welch R.A."/>
            <person name="Burland V."/>
            <person name="Plunkett G. III"/>
            <person name="Redford P."/>
            <person name="Roesch P."/>
            <person name="Rasko D."/>
            <person name="Buckles E.L."/>
            <person name="Liou S.-R."/>
            <person name="Boutin A."/>
            <person name="Hackett J."/>
            <person name="Stroud D."/>
            <person name="Mayhew G.F."/>
            <person name="Rose D.J."/>
            <person name="Zhou S."/>
            <person name="Schwartz D.C."/>
            <person name="Perna N.T."/>
            <person name="Mobley H.L.T."/>
            <person name="Donnenberg M.S."/>
            <person name="Blattner F.R."/>
        </authorList>
    </citation>
    <scope>NUCLEOTIDE SEQUENCE [LARGE SCALE GENOMIC DNA]</scope>
    <source>
        <strain>CFT073 / ATCC 700928 / UPEC</strain>
    </source>
</reference>
<accession>P0AEF5</accession>
<accession>Q54149</accession>
<protein>
    <recommendedName>
        <fullName>Transcriptional regulatory protein DpiA</fullName>
    </recommendedName>
    <alternativeName>
        <fullName>Destabilizer of plasmid inheritance</fullName>
    </alternativeName>
</protein>
<sequence length="226" mass="25453">MTAPLTLLIVEDETPLAEMHAEYIRHIPGFSQILLAGNLAQARMMIERFKPGLILLDNYLPDGRGINLLHELVQAHYPGDVVFTTAASDMETVSEAVRCGVFDYLIKPIAYERLGQTLTRFRQRKHMLESIDSASQKQIDEMFNAYARGEPKDELPTGIDPLTLNAVRKLFKEPGVQHTAETVAQALTISRTTARRYLEYCASRHLIIAEIVHGKVGRPQRIYHSG</sequence>
<keyword id="KW-0010">Activator</keyword>
<keyword id="KW-0963">Cytoplasm</keyword>
<keyword id="KW-0238">DNA-binding</keyword>
<keyword id="KW-0597">Phosphoprotein</keyword>
<keyword id="KW-1185">Reference proteome</keyword>
<keyword id="KW-0804">Transcription</keyword>
<keyword id="KW-0805">Transcription regulation</keyword>
<keyword id="KW-0902">Two-component regulatory system</keyword>
<organism>
    <name type="scientific">Escherichia coli O6:H1 (strain CFT073 / ATCC 700928 / UPEC)</name>
    <dbReference type="NCBI Taxonomy" id="199310"/>
    <lineage>
        <taxon>Bacteria</taxon>
        <taxon>Pseudomonadati</taxon>
        <taxon>Pseudomonadota</taxon>
        <taxon>Gammaproteobacteria</taxon>
        <taxon>Enterobacterales</taxon>
        <taxon>Enterobacteriaceae</taxon>
        <taxon>Escherichia</taxon>
    </lineage>
</organism>
<gene>
    <name type="primary">dpiA</name>
    <name type="synonym">citB</name>
    <name type="ordered locus">c0711</name>
</gene>
<proteinExistence type="inferred from homology"/>
<comment type="function">
    <text evidence="1">Member of the two-component regulatory system DpiA/DpiB, which is essential for expression of citrate-specific fermentation genes and genes involved in plasmid inheritance. Could be involved in response to both the presence of citrate and external redox conditions (By similarity).</text>
</comment>
<comment type="subcellular location">
    <subcellularLocation>
        <location evidence="3">Cytoplasm</location>
    </subcellularLocation>
</comment>
<comment type="PTM">
    <text evidence="1">Phosphorylated and activated by DpiB.</text>
</comment>
<name>DPIA_ECOL6</name>
<evidence type="ECO:0000250" key="1"/>
<evidence type="ECO:0000255" key="2">
    <source>
        <dbReference type="PROSITE-ProRule" id="PRU00169"/>
    </source>
</evidence>
<evidence type="ECO:0000305" key="3"/>
<feature type="chain" id="PRO_0000081070" description="Transcriptional regulatory protein DpiA">
    <location>
        <begin position="1"/>
        <end position="226"/>
    </location>
</feature>
<feature type="domain" description="Response regulatory" evidence="2">
    <location>
        <begin position="6"/>
        <end position="122"/>
    </location>
</feature>
<feature type="DNA-binding region" description="H-T-H motif" evidence="1">
    <location>
        <begin position="180"/>
        <end position="199"/>
    </location>
</feature>
<feature type="modified residue" description="4-aspartylphosphate" evidence="2">
    <location>
        <position position="57"/>
    </location>
</feature>